<gene>
    <name evidence="12" type="primary">ST8SIA3</name>
    <name type="synonym">SIAT8C</name>
</gene>
<feature type="chain" id="PRO_0000149289" description="Alpha-N-acetylneuraminate alpha-2,8-sialyltransferase ST8SIA3">
    <location>
        <begin position="1"/>
        <end position="380"/>
    </location>
</feature>
<feature type="topological domain" description="Cytoplasmic" evidence="2">
    <location>
        <begin position="1"/>
        <end position="9"/>
    </location>
</feature>
<feature type="transmembrane region" description="Helical; Signal-anchor for type II membrane protein" evidence="2">
    <location>
        <begin position="10"/>
        <end position="33"/>
    </location>
</feature>
<feature type="topological domain" description="Lumenal" evidence="2">
    <location>
        <begin position="34"/>
        <end position="380"/>
    </location>
</feature>
<feature type="active site" description="Proton donor/acceptor" evidence="11">
    <location>
        <position position="354"/>
    </location>
</feature>
<feature type="binding site" evidence="11 16">
    <location>
        <position position="167"/>
    </location>
    <ligand>
        <name>CMP-N-acetyl-beta-neuraminate</name>
        <dbReference type="ChEBI" id="CHEBI:57812"/>
    </ligand>
</feature>
<feature type="binding site" evidence="11 16">
    <location>
        <position position="190"/>
    </location>
    <ligand>
        <name>CMP-N-acetyl-beta-neuraminate</name>
        <dbReference type="ChEBI" id="CHEBI:57812"/>
    </ligand>
</feature>
<feature type="binding site" evidence="11 16">
    <location>
        <position position="300"/>
    </location>
    <ligand>
        <name>CMP-N-acetyl-beta-neuraminate</name>
        <dbReference type="ChEBI" id="CHEBI:57812"/>
    </ligand>
</feature>
<feature type="binding site" evidence="11 16">
    <location>
        <position position="301"/>
    </location>
    <ligand>
        <name>CMP-N-acetyl-beta-neuraminate</name>
        <dbReference type="ChEBI" id="CHEBI:57812"/>
    </ligand>
</feature>
<feature type="binding site" evidence="11 16">
    <location>
        <position position="302"/>
    </location>
    <ligand>
        <name>CMP-N-acetyl-beta-neuraminate</name>
        <dbReference type="ChEBI" id="CHEBI:57812"/>
    </ligand>
</feature>
<feature type="binding site" evidence="11 16">
    <location>
        <position position="322"/>
    </location>
    <ligand>
        <name>CMP-N-acetyl-beta-neuraminate</name>
        <dbReference type="ChEBI" id="CHEBI:57812"/>
    </ligand>
</feature>
<feature type="binding site" evidence="11 16">
    <location>
        <position position="336"/>
    </location>
    <ligand>
        <name>CMP-N-acetyl-beta-neuraminate</name>
        <dbReference type="ChEBI" id="CHEBI:57812"/>
    </ligand>
</feature>
<feature type="binding site" evidence="11 16">
    <location>
        <position position="337"/>
    </location>
    <ligand>
        <name>CMP-N-acetyl-beta-neuraminate</name>
        <dbReference type="ChEBI" id="CHEBI:57812"/>
    </ligand>
</feature>
<feature type="glycosylation site" description="N-linked (GlcNAc...) asparagine" evidence="4 6 13 15 16 17">
    <location>
        <position position="93"/>
    </location>
</feature>
<feature type="glycosylation site" description="N-linked (GlcNAc...) asparagine" evidence="4 16">
    <location>
        <position position="113"/>
    </location>
</feature>
<feature type="glycosylation site" description="N-linked (GlcNAc...) asparagine" evidence="4 6 13 14 16 17">
    <location>
        <position position="160"/>
    </location>
</feature>
<feature type="glycosylation site" description="N-linked (GlcNAc...) asparagine" evidence="2 4 13 14 15 16 17">
    <location>
        <position position="206"/>
    </location>
</feature>
<feature type="disulfide bond" evidence="4 13 14 15 16">
    <location>
        <begin position="162"/>
        <end position="313"/>
    </location>
</feature>
<feature type="disulfide bond" evidence="4 13 14 15 16">
    <location>
        <begin position="176"/>
        <end position="379"/>
    </location>
</feature>
<feature type="sequence variant" id="VAR_020249" description="In dbSNP:rs3745060.">
    <original>K</original>
    <variation>T</variation>
    <location>
        <position position="91"/>
    </location>
</feature>
<feature type="mutagenesis site" description="Loss of alpha-N-acetylneuraminate alpha-2,8-sialyltransferase activity." evidence="4">
    <original>N</original>
    <variation>A</variation>
    <location>
        <position position="190"/>
    </location>
</feature>
<feature type="mutagenesis site" description="Loss of alpha-N-acetylneuraminate alpha-2,8-sialyltransferase activity." evidence="4">
    <original>H</original>
    <variation>A</variation>
    <location>
        <position position="337"/>
    </location>
</feature>
<feature type="mutagenesis site" description="Abolishes enzyme activity." evidence="4">
    <original>H</original>
    <variation>A</variation>
    <location>
        <position position="354"/>
    </location>
</feature>
<feature type="sequence conflict" description="In Ref. 1; AAB87642." evidence="9" ref="1">
    <original>GS</original>
    <variation>FI</variation>
    <location>
        <begin position="173"/>
        <end position="174"/>
    </location>
</feature>
<feature type="sequence conflict" description="In Ref. 1; AAB87642." evidence="9" ref="1">
    <original>Q</original>
    <variation>R</variation>
    <location>
        <position position="178"/>
    </location>
</feature>
<feature type="sequence conflict" description="In Ref. 1; AAB87642." evidence="9" ref="1">
    <original>T</original>
    <variation>S</variation>
    <location>
        <position position="194"/>
    </location>
</feature>
<feature type="helix" evidence="19">
    <location>
        <begin position="94"/>
        <end position="107"/>
    </location>
</feature>
<feature type="helix" evidence="19">
    <location>
        <begin position="110"/>
        <end position="113"/>
    </location>
</feature>
<feature type="helix" evidence="19">
    <location>
        <begin position="118"/>
        <end position="120"/>
    </location>
</feature>
<feature type="helix" evidence="19">
    <location>
        <begin position="142"/>
        <end position="146"/>
    </location>
</feature>
<feature type="turn" evidence="19">
    <location>
        <begin position="153"/>
        <end position="156"/>
    </location>
</feature>
<feature type="strand" evidence="19">
    <location>
        <begin position="159"/>
        <end position="165"/>
    </location>
</feature>
<feature type="helix" evidence="19">
    <location>
        <begin position="169"/>
        <end position="171"/>
    </location>
</feature>
<feature type="helix" evidence="19">
    <location>
        <begin position="177"/>
        <end position="181"/>
    </location>
</feature>
<feature type="strand" evidence="19">
    <location>
        <begin position="183"/>
        <end position="189"/>
    </location>
</feature>
<feature type="helix" evidence="19">
    <location>
        <begin position="195"/>
        <end position="197"/>
    </location>
</feature>
<feature type="helix" evidence="19">
    <location>
        <begin position="198"/>
        <end position="201"/>
    </location>
</feature>
<feature type="strand" evidence="19">
    <location>
        <begin position="206"/>
        <end position="209"/>
    </location>
</feature>
<feature type="helix" evidence="19">
    <location>
        <begin position="214"/>
        <end position="218"/>
    </location>
</feature>
<feature type="helix" evidence="19">
    <location>
        <begin position="220"/>
        <end position="222"/>
    </location>
</feature>
<feature type="helix" evidence="19">
    <location>
        <begin position="225"/>
        <end position="236"/>
    </location>
</feature>
<feature type="turn" evidence="19">
    <location>
        <begin position="237"/>
        <end position="240"/>
    </location>
</feature>
<feature type="strand" evidence="19">
    <location>
        <begin position="242"/>
        <end position="244"/>
    </location>
</feature>
<feature type="helix" evidence="19">
    <location>
        <begin position="251"/>
        <end position="253"/>
    </location>
</feature>
<feature type="helix" evidence="19">
    <location>
        <begin position="254"/>
        <end position="266"/>
    </location>
</feature>
<feature type="turn" evidence="19">
    <location>
        <begin position="267"/>
        <end position="269"/>
    </location>
</feature>
<feature type="strand" evidence="19">
    <location>
        <begin position="274"/>
        <end position="276"/>
    </location>
</feature>
<feature type="helix" evidence="19">
    <location>
        <begin position="282"/>
        <end position="291"/>
    </location>
</feature>
<feature type="helix" evidence="19">
    <location>
        <begin position="301"/>
        <end position="312"/>
    </location>
</feature>
<feature type="strand" evidence="19">
    <location>
        <begin position="313"/>
        <end position="320"/>
    </location>
</feature>
<feature type="strand" evidence="19">
    <location>
        <begin position="324"/>
        <end position="326"/>
    </location>
</feature>
<feature type="turn" evidence="19">
    <location>
        <begin position="328"/>
        <end position="330"/>
    </location>
</feature>
<feature type="strand" evidence="18">
    <location>
        <begin position="351"/>
        <end position="353"/>
    </location>
</feature>
<feature type="helix" evidence="19">
    <location>
        <begin position="356"/>
        <end position="368"/>
    </location>
</feature>
<feature type="strand" evidence="19">
    <location>
        <begin position="371"/>
        <end position="374"/>
    </location>
</feature>
<accession>O43173</accession>
<accession>A8K0F2</accession>
<accession>Q6B085</accession>
<accession>Q9NS41</accession>
<reference key="1">
    <citation type="journal article" date="1998" name="Arch. Biochem. Biophys.">
        <title>Cloning and expression of cDNA for a human Sia alpha 2,3Gal beta 1,4GlcNA:alpha 2,8-sialyltransferase (hST8Sia III).</title>
        <authorList>
            <person name="Lee Y.-C."/>
            <person name="Kim Y.-J."/>
            <person name="Lee K.-Y."/>
            <person name="Kim K.-S."/>
            <person name="Kim B.-U."/>
            <person name="Kim H.-N."/>
            <person name="Kim C.-H."/>
            <person name="Do S.-I."/>
        </authorList>
    </citation>
    <scope>NUCLEOTIDE SEQUENCE [MRNA]</scope>
    <scope>FUNCTION</scope>
    <scope>CATALYTIC ACTIVITY</scope>
    <scope>TISSUE SPECIFICITY</scope>
    <source>
        <tissue>Brain</tissue>
    </source>
</reference>
<reference key="2">
    <citation type="journal article" date="2000" name="J. Biol. Chem.">
        <title>Differential biosynthesis of polysialic acid on neural cell adhesion molecule (NCAM) and oligosaccharide acceptors by three distinct alpha2,8-Sialyltransferases, ST8Sia IV (PST), ST8Sia II (STX), and ST8Sia III.</title>
        <authorList>
            <person name="Angata K."/>
            <person name="Suzuki M."/>
            <person name="McAuliffe J."/>
            <person name="Ding Y."/>
            <person name="Hindsgaul O."/>
            <person name="Fukuda M."/>
        </authorList>
    </citation>
    <scope>NUCLEOTIDE SEQUENCE [MRNA]</scope>
    <scope>FUNCTION</scope>
    <scope>CATALYTIC ACTIVITY</scope>
    <scope>SUBCELLULAR LOCATION</scope>
    <scope>AUTOPOLYSIALYLATION</scope>
    <source>
        <tissue>Fetal brain</tissue>
    </source>
</reference>
<reference key="3">
    <citation type="submission" date="2004-02" db="EMBL/GenBank/DDBJ databases">
        <authorList>
            <person name="Angata K."/>
            <person name="Fukuda M."/>
        </authorList>
    </citation>
    <scope>SEQUENCE REVISION TO 19; 241 AND 296</scope>
</reference>
<reference key="4">
    <citation type="journal article" date="2004" name="Nat. Genet.">
        <title>Complete sequencing and characterization of 21,243 full-length human cDNAs.</title>
        <authorList>
            <person name="Ota T."/>
            <person name="Suzuki Y."/>
            <person name="Nishikawa T."/>
            <person name="Otsuki T."/>
            <person name="Sugiyama T."/>
            <person name="Irie R."/>
            <person name="Wakamatsu A."/>
            <person name="Hayashi K."/>
            <person name="Sato H."/>
            <person name="Nagai K."/>
            <person name="Kimura K."/>
            <person name="Makita H."/>
            <person name="Sekine M."/>
            <person name="Obayashi M."/>
            <person name="Nishi T."/>
            <person name="Shibahara T."/>
            <person name="Tanaka T."/>
            <person name="Ishii S."/>
            <person name="Yamamoto J."/>
            <person name="Saito K."/>
            <person name="Kawai Y."/>
            <person name="Isono Y."/>
            <person name="Nakamura Y."/>
            <person name="Nagahari K."/>
            <person name="Murakami K."/>
            <person name="Yasuda T."/>
            <person name="Iwayanagi T."/>
            <person name="Wagatsuma M."/>
            <person name="Shiratori A."/>
            <person name="Sudo H."/>
            <person name="Hosoiri T."/>
            <person name="Kaku Y."/>
            <person name="Kodaira H."/>
            <person name="Kondo H."/>
            <person name="Sugawara M."/>
            <person name="Takahashi M."/>
            <person name="Kanda K."/>
            <person name="Yokoi T."/>
            <person name="Furuya T."/>
            <person name="Kikkawa E."/>
            <person name="Omura Y."/>
            <person name="Abe K."/>
            <person name="Kamihara K."/>
            <person name="Katsuta N."/>
            <person name="Sato K."/>
            <person name="Tanikawa M."/>
            <person name="Yamazaki M."/>
            <person name="Ninomiya K."/>
            <person name="Ishibashi T."/>
            <person name="Yamashita H."/>
            <person name="Murakawa K."/>
            <person name="Fujimori K."/>
            <person name="Tanai H."/>
            <person name="Kimata M."/>
            <person name="Watanabe M."/>
            <person name="Hiraoka S."/>
            <person name="Chiba Y."/>
            <person name="Ishida S."/>
            <person name="Ono Y."/>
            <person name="Takiguchi S."/>
            <person name="Watanabe S."/>
            <person name="Yosida M."/>
            <person name="Hotuta T."/>
            <person name="Kusano J."/>
            <person name="Kanehori K."/>
            <person name="Takahashi-Fujii A."/>
            <person name="Hara H."/>
            <person name="Tanase T.-O."/>
            <person name="Nomura Y."/>
            <person name="Togiya S."/>
            <person name="Komai F."/>
            <person name="Hara R."/>
            <person name="Takeuchi K."/>
            <person name="Arita M."/>
            <person name="Imose N."/>
            <person name="Musashino K."/>
            <person name="Yuuki H."/>
            <person name="Oshima A."/>
            <person name="Sasaki N."/>
            <person name="Aotsuka S."/>
            <person name="Yoshikawa Y."/>
            <person name="Matsunawa H."/>
            <person name="Ichihara T."/>
            <person name="Shiohata N."/>
            <person name="Sano S."/>
            <person name="Moriya S."/>
            <person name="Momiyama H."/>
            <person name="Satoh N."/>
            <person name="Takami S."/>
            <person name="Terashima Y."/>
            <person name="Suzuki O."/>
            <person name="Nakagawa S."/>
            <person name="Senoh A."/>
            <person name="Mizoguchi H."/>
            <person name="Goto Y."/>
            <person name="Shimizu F."/>
            <person name="Wakebe H."/>
            <person name="Hishigaki H."/>
            <person name="Watanabe T."/>
            <person name="Sugiyama A."/>
            <person name="Takemoto M."/>
            <person name="Kawakami B."/>
            <person name="Yamazaki M."/>
            <person name="Watanabe K."/>
            <person name="Kumagai A."/>
            <person name="Itakura S."/>
            <person name="Fukuzumi Y."/>
            <person name="Fujimori Y."/>
            <person name="Komiyama M."/>
            <person name="Tashiro H."/>
            <person name="Tanigami A."/>
            <person name="Fujiwara T."/>
            <person name="Ono T."/>
            <person name="Yamada K."/>
            <person name="Fujii Y."/>
            <person name="Ozaki K."/>
            <person name="Hirao M."/>
            <person name="Ohmori Y."/>
            <person name="Kawabata A."/>
            <person name="Hikiji T."/>
            <person name="Kobatake N."/>
            <person name="Inagaki H."/>
            <person name="Ikema Y."/>
            <person name="Okamoto S."/>
            <person name="Okitani R."/>
            <person name="Kawakami T."/>
            <person name="Noguchi S."/>
            <person name="Itoh T."/>
            <person name="Shigeta K."/>
            <person name="Senba T."/>
            <person name="Matsumura K."/>
            <person name="Nakajima Y."/>
            <person name="Mizuno T."/>
            <person name="Morinaga M."/>
            <person name="Sasaki M."/>
            <person name="Togashi T."/>
            <person name="Oyama M."/>
            <person name="Hata H."/>
            <person name="Watanabe M."/>
            <person name="Komatsu T."/>
            <person name="Mizushima-Sugano J."/>
            <person name="Satoh T."/>
            <person name="Shirai Y."/>
            <person name="Takahashi Y."/>
            <person name="Nakagawa K."/>
            <person name="Okumura K."/>
            <person name="Nagase T."/>
            <person name="Nomura N."/>
            <person name="Kikuchi H."/>
            <person name="Masuho Y."/>
            <person name="Yamashita R."/>
            <person name="Nakai K."/>
            <person name="Yada T."/>
            <person name="Nakamura Y."/>
            <person name="Ohara O."/>
            <person name="Isogai T."/>
            <person name="Sugano S."/>
        </authorList>
    </citation>
    <scope>NUCLEOTIDE SEQUENCE [LARGE SCALE MRNA]</scope>
    <source>
        <tissue>Brain</tissue>
        <tissue>Cerebellum</tissue>
    </source>
</reference>
<reference key="5">
    <citation type="journal article" date="2004" name="Genome Res.">
        <title>The status, quality, and expansion of the NIH full-length cDNA project: the Mammalian Gene Collection (MGC).</title>
        <authorList>
            <consortium name="The MGC Project Team"/>
        </authorList>
    </citation>
    <scope>NUCLEOTIDE SEQUENCE [LARGE SCALE MRNA]</scope>
</reference>
<reference evidence="13 14 15 16" key="6">
    <citation type="journal article" date="2015" name="Nat. Struct. Mol. Biol.">
        <title>Structure of human ST8SiaIII sialyltransferase provides insight into cell-surface polysialylation.</title>
        <authorList>
            <person name="Volkers G."/>
            <person name="Worrall L.J."/>
            <person name="Kwan D.H."/>
            <person name="Yu C.C."/>
            <person name="Baumann L."/>
            <person name="Lameignere E."/>
            <person name="Wasney G.A."/>
            <person name="Scott N.E."/>
            <person name="Wakarchuk W."/>
            <person name="Foster L.J."/>
            <person name="Withers S.G."/>
            <person name="Strynadka N.C."/>
        </authorList>
    </citation>
    <scope>X-RAY CRYSTALLOGRAPHY (1.85 ANGSTROMS) OF 81-380 IN COMPLEXES WITH CMP-N-ACETYL-BETA-NEURAMINATE AND ALPHA-NEU5AC-(2-&gt;3)-BETA-D-GAL-(1-&gt;4)-6S-D-GLCNAC</scope>
    <scope>FUNCTION</scope>
    <scope>CATALYTIC ACTIVITY</scope>
    <scope>ACTIVE SITE</scope>
    <scope>BIOPHYSICOCHEMICAL PROPERTIES</scope>
    <scope>MUTAGENESIS OF ASN-190; HIS-337 AND HIS-354</scope>
    <scope>SUBUNIT</scope>
    <scope>PATHWAY</scope>
    <scope>DISULFIDE BONDS</scope>
    <scope>GLYCOSYLATION AT ASN-93; ASN-113; ASN-160 AND ASN-206</scope>
    <scope>IDENTIFICATION BY MASS SPECTROMETRY</scope>
</reference>
<reference evidence="17" key="7">
    <citation type="submission" date="2015-07" db="PDB data bank">
        <title>To be published.</title>
        <authorList>
            <person name="Volkers G."/>
            <person name="Strynadka N.C.J."/>
        </authorList>
    </citation>
    <scope>X-RAY CRYSTALLOGRAPHY (2.15 ANGSTROMS) OF 81-380</scope>
    <scope>GLYCOSYLATION AT ASN-93; ASN-113; ASN-160 AND ASN-206</scope>
</reference>
<evidence type="ECO:0000250" key="1">
    <source>
        <dbReference type="UniProtKB" id="Q64689"/>
    </source>
</evidence>
<evidence type="ECO:0000255" key="2"/>
<evidence type="ECO:0000269" key="3">
    <source>
    </source>
</evidence>
<evidence type="ECO:0000269" key="4">
    <source>
    </source>
</evidence>
<evidence type="ECO:0000269" key="5">
    <source>
    </source>
</evidence>
<evidence type="ECO:0000269" key="6">
    <source ref="7"/>
</evidence>
<evidence type="ECO:0000303" key="7">
    <source>
    </source>
</evidence>
<evidence type="ECO:0000303" key="8">
    <source>
    </source>
</evidence>
<evidence type="ECO:0000305" key="9"/>
<evidence type="ECO:0000305" key="10">
    <source>
    </source>
</evidence>
<evidence type="ECO:0000305" key="11">
    <source>
    </source>
</evidence>
<evidence type="ECO:0000312" key="12">
    <source>
        <dbReference type="HGNC" id="HGNC:14269"/>
    </source>
</evidence>
<evidence type="ECO:0007744" key="13">
    <source>
        <dbReference type="PDB" id="5BO6"/>
    </source>
</evidence>
<evidence type="ECO:0007744" key="14">
    <source>
        <dbReference type="PDB" id="5BO7"/>
    </source>
</evidence>
<evidence type="ECO:0007744" key="15">
    <source>
        <dbReference type="PDB" id="5BO8"/>
    </source>
</evidence>
<evidence type="ECO:0007744" key="16">
    <source>
        <dbReference type="PDB" id="5BO9"/>
    </source>
</evidence>
<evidence type="ECO:0007744" key="17">
    <source>
        <dbReference type="PDB" id="5CXY"/>
    </source>
</evidence>
<evidence type="ECO:0007829" key="18">
    <source>
        <dbReference type="PDB" id="5BO6"/>
    </source>
</evidence>
<evidence type="ECO:0007829" key="19">
    <source>
        <dbReference type="PDB" id="5BO7"/>
    </source>
</evidence>
<dbReference type="EC" id="2.4.3.-" evidence="5"/>
<dbReference type="EC" id="2.4.3.8" evidence="1"/>
<dbReference type="EMBL" id="AF004668">
    <property type="protein sequence ID" value="AAB87642.1"/>
    <property type="molecule type" value="mRNA"/>
</dbReference>
<dbReference type="EMBL" id="AF003092">
    <property type="protein sequence ID" value="AAC15901.2"/>
    <property type="molecule type" value="mRNA"/>
</dbReference>
<dbReference type="EMBL" id="AK289517">
    <property type="protein sequence ID" value="BAF82206.1"/>
    <property type="molecule type" value="mRNA"/>
</dbReference>
<dbReference type="EMBL" id="AK313047">
    <property type="protein sequence ID" value="BAG35879.1"/>
    <property type="molecule type" value="mRNA"/>
</dbReference>
<dbReference type="EMBL" id="BC074909">
    <property type="protein sequence ID" value="AAH74909.1"/>
    <property type="molecule type" value="mRNA"/>
</dbReference>
<dbReference type="CCDS" id="CCDS32834.1"/>
<dbReference type="RefSeq" id="NP_056963.2">
    <property type="nucleotide sequence ID" value="NM_015879.3"/>
</dbReference>
<dbReference type="PDB" id="5BO6">
    <property type="method" value="X-ray"/>
    <property type="resolution" value="2.07 A"/>
    <property type="chains" value="A/B=81-380"/>
</dbReference>
<dbReference type="PDB" id="5BO7">
    <property type="method" value="X-ray"/>
    <property type="resolution" value="1.85 A"/>
    <property type="chains" value="A/B=81-380"/>
</dbReference>
<dbReference type="PDB" id="5BO8">
    <property type="method" value="X-ray"/>
    <property type="resolution" value="2.70 A"/>
    <property type="chains" value="A/B=61-380"/>
</dbReference>
<dbReference type="PDB" id="5BO9">
    <property type="method" value="X-ray"/>
    <property type="resolution" value="2.30 A"/>
    <property type="chains" value="A/B=81-380"/>
</dbReference>
<dbReference type="PDB" id="5CXY">
    <property type="method" value="X-ray"/>
    <property type="resolution" value="2.15 A"/>
    <property type="chains" value="A/B=81-380"/>
</dbReference>
<dbReference type="PDBsum" id="5BO6"/>
<dbReference type="PDBsum" id="5BO7"/>
<dbReference type="PDBsum" id="5BO8"/>
<dbReference type="PDBsum" id="5BO9"/>
<dbReference type="PDBsum" id="5CXY"/>
<dbReference type="SMR" id="O43173"/>
<dbReference type="BioGRID" id="119243">
    <property type="interactions" value="34"/>
</dbReference>
<dbReference type="DIP" id="DIP-61706N"/>
<dbReference type="FunCoup" id="O43173">
    <property type="interactions" value="38"/>
</dbReference>
<dbReference type="IntAct" id="O43173">
    <property type="interactions" value="26"/>
</dbReference>
<dbReference type="STRING" id="9606.ENSP00000320431"/>
<dbReference type="CAZy" id="GT29">
    <property type="family name" value="Glycosyltransferase Family 29"/>
</dbReference>
<dbReference type="GlyCosmos" id="O43173">
    <property type="glycosylation" value="4 sites, No reported glycans"/>
</dbReference>
<dbReference type="GlyGen" id="O43173">
    <property type="glycosylation" value="4 sites"/>
</dbReference>
<dbReference type="iPTMnet" id="O43173"/>
<dbReference type="PhosphoSitePlus" id="O43173"/>
<dbReference type="BioMuta" id="ST8SIA3"/>
<dbReference type="MassIVE" id="O43173"/>
<dbReference type="PaxDb" id="9606-ENSP00000320431"/>
<dbReference type="PeptideAtlas" id="O43173"/>
<dbReference type="ProteomicsDB" id="48790"/>
<dbReference type="Antibodypedia" id="22809">
    <property type="antibodies" value="70 antibodies from 18 providers"/>
</dbReference>
<dbReference type="DNASU" id="51046"/>
<dbReference type="Ensembl" id="ENST00000324000.4">
    <property type="protein sequence ID" value="ENSP00000320431.2"/>
    <property type="gene ID" value="ENSG00000177511.6"/>
</dbReference>
<dbReference type="GeneID" id="51046"/>
<dbReference type="KEGG" id="hsa:51046"/>
<dbReference type="MANE-Select" id="ENST00000324000.4">
    <property type="protein sequence ID" value="ENSP00000320431.2"/>
    <property type="RefSeq nucleotide sequence ID" value="NM_015879.3"/>
    <property type="RefSeq protein sequence ID" value="NP_056963.2"/>
</dbReference>
<dbReference type="UCSC" id="uc002lgn.4">
    <property type="organism name" value="human"/>
</dbReference>
<dbReference type="AGR" id="HGNC:14269"/>
<dbReference type="CTD" id="51046"/>
<dbReference type="DisGeNET" id="51046"/>
<dbReference type="GeneCards" id="ST8SIA3"/>
<dbReference type="HGNC" id="HGNC:14269">
    <property type="gene designation" value="ST8SIA3"/>
</dbReference>
<dbReference type="HPA" id="ENSG00000177511">
    <property type="expression patterns" value="Tissue enhanced (brain, pituitary gland, retina)"/>
</dbReference>
<dbReference type="MIM" id="609478">
    <property type="type" value="gene"/>
</dbReference>
<dbReference type="neXtProt" id="NX_O43173"/>
<dbReference type="OpenTargets" id="ENSG00000177511"/>
<dbReference type="PharmGKB" id="PA37864"/>
<dbReference type="VEuPathDB" id="HostDB:ENSG00000177511"/>
<dbReference type="eggNOG" id="KOG2692">
    <property type="taxonomic scope" value="Eukaryota"/>
</dbReference>
<dbReference type="GeneTree" id="ENSGT01030000234535"/>
<dbReference type="HOGENOM" id="CLU_048583_0_0_1"/>
<dbReference type="InParanoid" id="O43173"/>
<dbReference type="OMA" id="ILVGSQC"/>
<dbReference type="OrthoDB" id="10264956at2759"/>
<dbReference type="PAN-GO" id="O43173">
    <property type="GO annotations" value="4 GO annotations based on evolutionary models"/>
</dbReference>
<dbReference type="PhylomeDB" id="O43173"/>
<dbReference type="TreeFam" id="TF323961"/>
<dbReference type="BRENDA" id="2.4.99.8">
    <property type="organism ID" value="2681"/>
</dbReference>
<dbReference type="PathwayCommons" id="O43173"/>
<dbReference type="Reactome" id="R-HSA-4085001">
    <property type="pathway name" value="Sialic acid metabolism"/>
</dbReference>
<dbReference type="Reactome" id="R-HSA-975577">
    <property type="pathway name" value="N-Glycan antennae elongation"/>
</dbReference>
<dbReference type="SignaLink" id="O43173"/>
<dbReference type="UniPathway" id="UPA00378"/>
<dbReference type="BioGRID-ORCS" id="51046">
    <property type="hits" value="4 hits in 1142 CRISPR screens"/>
</dbReference>
<dbReference type="ChiTaRS" id="ST8SIA3">
    <property type="organism name" value="human"/>
</dbReference>
<dbReference type="EvolutionaryTrace" id="O43173"/>
<dbReference type="GenomeRNAi" id="51046"/>
<dbReference type="Pharos" id="O43173">
    <property type="development level" value="Tbio"/>
</dbReference>
<dbReference type="PRO" id="PR:O43173"/>
<dbReference type="Proteomes" id="UP000005640">
    <property type="component" value="Chromosome 18"/>
</dbReference>
<dbReference type="RNAct" id="O43173">
    <property type="molecule type" value="protein"/>
</dbReference>
<dbReference type="Bgee" id="ENSG00000177511">
    <property type="expression patterns" value="Expressed in middle temporal gyrus and 112 other cell types or tissues"/>
</dbReference>
<dbReference type="ExpressionAtlas" id="O43173">
    <property type="expression patterns" value="baseline and differential"/>
</dbReference>
<dbReference type="GO" id="GO:0000139">
    <property type="term" value="C:Golgi membrane"/>
    <property type="evidence" value="ECO:0000304"/>
    <property type="project" value="Reactome"/>
</dbReference>
<dbReference type="GO" id="GO:0003828">
    <property type="term" value="F:alpha-N-acetylneuraminate alpha-2,8-sialyltransferase activity"/>
    <property type="evidence" value="ECO:0000314"/>
    <property type="project" value="UniProtKB"/>
</dbReference>
<dbReference type="GO" id="GO:0042802">
    <property type="term" value="F:identical protein binding"/>
    <property type="evidence" value="ECO:0000353"/>
    <property type="project" value="IntAct"/>
</dbReference>
<dbReference type="GO" id="GO:0033691">
    <property type="term" value="F:sialic acid binding"/>
    <property type="evidence" value="ECO:0000305"/>
    <property type="project" value="BHF-UCL"/>
</dbReference>
<dbReference type="GO" id="GO:0001574">
    <property type="term" value="P:ganglioside biosynthetic process"/>
    <property type="evidence" value="ECO:0000314"/>
    <property type="project" value="BHF-UCL"/>
</dbReference>
<dbReference type="GO" id="GO:0009100">
    <property type="term" value="P:glycoprotein metabolic process"/>
    <property type="evidence" value="ECO:0000314"/>
    <property type="project" value="BHF-UCL"/>
</dbReference>
<dbReference type="GO" id="GO:0006688">
    <property type="term" value="P:glycosphingolipid biosynthetic process"/>
    <property type="evidence" value="ECO:0000304"/>
    <property type="project" value="ProtInc"/>
</dbReference>
<dbReference type="GO" id="GO:0006491">
    <property type="term" value="P:N-glycan processing"/>
    <property type="evidence" value="ECO:0000314"/>
    <property type="project" value="UniProtKB"/>
</dbReference>
<dbReference type="GO" id="GO:0009311">
    <property type="term" value="P:oligosaccharide metabolic process"/>
    <property type="evidence" value="ECO:0000314"/>
    <property type="project" value="BHF-UCL"/>
</dbReference>
<dbReference type="GO" id="GO:0006486">
    <property type="term" value="P:protein glycosylation"/>
    <property type="evidence" value="ECO:0000314"/>
    <property type="project" value="BHF-UCL"/>
</dbReference>
<dbReference type="GO" id="GO:0097503">
    <property type="term" value="P:sialylation"/>
    <property type="evidence" value="ECO:0000314"/>
    <property type="project" value="UniProtKB"/>
</dbReference>
<dbReference type="CDD" id="cd23970">
    <property type="entry name" value="GT29_ST8SIA3_oligo"/>
    <property type="match status" value="1"/>
</dbReference>
<dbReference type="FunFam" id="3.90.1480.20:FF:000001">
    <property type="entry name" value="ST8 alpha-N-acetyl-neuraminide alpha-2,8-sialyltransferase 2"/>
    <property type="match status" value="1"/>
</dbReference>
<dbReference type="Gene3D" id="3.90.1480.20">
    <property type="entry name" value="Glycosyl transferase family 29"/>
    <property type="match status" value="1"/>
</dbReference>
<dbReference type="InterPro" id="IPR001675">
    <property type="entry name" value="Glyco_trans_29"/>
</dbReference>
<dbReference type="InterPro" id="IPR050943">
    <property type="entry name" value="Glycosyltr_29_Sialyltrsf"/>
</dbReference>
<dbReference type="InterPro" id="IPR038578">
    <property type="entry name" value="GT29-like_sf"/>
</dbReference>
<dbReference type="InterPro" id="IPR012163">
    <property type="entry name" value="Sialyl_trans"/>
</dbReference>
<dbReference type="PANTHER" id="PTHR11987">
    <property type="entry name" value="ALPHA-2,8-SIALYLTRANSFERASE"/>
    <property type="match status" value="1"/>
</dbReference>
<dbReference type="PANTHER" id="PTHR11987:SF36">
    <property type="entry name" value="SIA-ALPHA-2,3-GAL-BETA-1,4-GLCNAC-R:ALPHA 2,8-SIALYLTRANSFERASE"/>
    <property type="match status" value="1"/>
</dbReference>
<dbReference type="Pfam" id="PF00777">
    <property type="entry name" value="Glyco_transf_29"/>
    <property type="match status" value="1"/>
</dbReference>
<dbReference type="PIRSF" id="PIRSF005557">
    <property type="entry name" value="Sialyl_trans"/>
    <property type="match status" value="1"/>
</dbReference>
<proteinExistence type="evidence at protein level"/>
<protein>
    <recommendedName>
        <fullName evidence="9">Alpha-N-acetylneuraminate alpha-2,8-sialyltransferase ST8SIA3</fullName>
        <ecNumber evidence="5">2.4.3.-</ecNumber>
    </recommendedName>
    <alternativeName>
        <fullName>Alpha-2,8-sialyltransferase 8C</fullName>
    </alternativeName>
    <alternativeName>
        <fullName>Alpha-2,8-sialyltransferase III</fullName>
    </alternativeName>
    <alternativeName>
        <fullName>Ganglioside GD3 synthase ST8SIA3</fullName>
        <ecNumber evidence="1">2.4.3.8</ecNumber>
    </alternativeName>
    <alternativeName>
        <fullName>ST8 alpha-N-acetyl-neuraminide alpha-2,8-sialyltransferase 3</fullName>
    </alternativeName>
    <alternativeName>
        <fullName evidence="8">Sia-a2,3-Gal-b1,4-Glc-NAc-R:a2,8-sialyltransferase</fullName>
        <shortName evidence="8">hST8Sia III</shortName>
    </alternativeName>
    <alternativeName>
        <fullName>Sialyltransferase 8C</fullName>
        <shortName>SIAT8-C</shortName>
    </alternativeName>
    <alternativeName>
        <fullName>Sialyltransferase St8Sia III</fullName>
        <shortName evidence="7">ST8SiaIII</shortName>
    </alternativeName>
</protein>
<keyword id="KW-0002">3D-structure</keyword>
<keyword id="KW-1015">Disulfide bond</keyword>
<keyword id="KW-0325">Glycoprotein</keyword>
<keyword id="KW-0328">Glycosyltransferase</keyword>
<keyword id="KW-0333">Golgi apparatus</keyword>
<keyword id="KW-0472">Membrane</keyword>
<keyword id="KW-1267">Proteomics identification</keyword>
<keyword id="KW-1185">Reference proteome</keyword>
<keyword id="KW-0735">Signal-anchor</keyword>
<keyword id="KW-0808">Transferase</keyword>
<keyword id="KW-0812">Transmembrane</keyword>
<keyword id="KW-1133">Transmembrane helix</keyword>
<comment type="function">
    <text evidence="1 3 4 5">Catalyzes the transfer of sialic acid from a CMP-linked sialic acid donor onto a terminal alpha-2,3-, alpha-2,6-, or alpha-2,8-linked sialic acid of an acceptor, such as N-linked oligosaccharides of glycoproteins and glycolipids through alpha-2,8-linkages (PubMed:10766765, PubMed:26192331, PubMed:9826427). Forms oligosialic and polysialic acid on various sialylated N-acetyllactosamine oligosaccharides of glycoproteins, including FETUB N-glycans, a2-HS-glycoprotein (AHSG) and alpha 2,3-sialylated glycosphingolipids, such as alpha 2,3-sialylparagloboside and ganglioside GM3 and to a lesser extent NCAM1 N-glycans (PubMed:10766765, PubMed:9826427). However, it is much more specific to N-linked oligosaccharides of glycoproteins than glycosphingolipids (By similarity). 2,3-sialylparagloboside serves as the best acceptor substrate among the glycolipids (By similarity). alpha-Neu5Ac-(2-&gt;8)-alpha-Neu5Ac-(2-&gt;3)-beta-D-Gal-(1-&gt;4)-6S-D-GlcNAc and monosialyl and disialyl N-acetyllactosamines are the best acceptor substrates among glycoproteins (PubMed:10766765, PubMed:26192331). May plays critical role in the striatum by mediating the formation of disialylated and trisialylated terminal glycotopes on N- and O-glycans of specific striatal proteins, regulating their distribution in lipid rafts, affecting their interaction with other binding partners, and subsequently modulating striatal functions (By similarity).</text>
</comment>
<comment type="catalytic activity">
    <reaction evidence="3 5">
        <text>[N-acetyl-alpha-D-neuraminosyl-(2-&gt;8)](n) + CMP-N-acetyl-beta-neuraminate = [N-acetyl-alpha-D-neuraminosyl-(2-&gt;8)](n+1) + CMP + H(+)</text>
        <dbReference type="Rhea" id="RHEA:77367"/>
        <dbReference type="Rhea" id="RHEA-COMP:14315"/>
        <dbReference type="Rhea" id="RHEA-COMP:18878"/>
        <dbReference type="ChEBI" id="CHEBI:15378"/>
        <dbReference type="ChEBI" id="CHEBI:57812"/>
        <dbReference type="ChEBI" id="CHEBI:60377"/>
        <dbReference type="ChEBI" id="CHEBI:139252"/>
    </reaction>
    <physiologicalReaction direction="left-to-right" evidence="3 5">
        <dbReference type="Rhea" id="RHEA:77368"/>
    </physiologicalReaction>
</comment>
<comment type="catalytic activity">
    <reaction evidence="4">
        <text>alpha-Neu5Ac-(2-&gt;3)-beta-D-Gal-(1-&gt;4)-6S-D-GlcNAc + CMP-N-acetyl-beta-neuraminate = alpha-Neu5Ac-(2-&gt;8)-alpha-Neu5Ac-(2-&gt;3)-beta-D-Gal-(1-&gt;4)-6S-D-GlcNAc + CMP + H(+)</text>
        <dbReference type="Rhea" id="RHEA:77391"/>
        <dbReference type="ChEBI" id="CHEBI:15378"/>
        <dbReference type="ChEBI" id="CHEBI:57812"/>
        <dbReference type="ChEBI" id="CHEBI:60377"/>
        <dbReference type="ChEBI" id="CHEBI:197339"/>
        <dbReference type="ChEBI" id="CHEBI:197340"/>
    </reaction>
    <physiologicalReaction direction="left-to-right" evidence="4">
        <dbReference type="Rhea" id="RHEA:77392"/>
    </physiologicalReaction>
</comment>
<comment type="catalytic activity">
    <reaction evidence="1">
        <text>a ganglioside GM3 (d18:1(4E)) + CMP-N-acetyl-beta-neuraminate = a ganglioside GD3 (d18:1(4E)) + CMP + H(+)</text>
        <dbReference type="Rhea" id="RHEA:41760"/>
        <dbReference type="ChEBI" id="CHEBI:15378"/>
        <dbReference type="ChEBI" id="CHEBI:57812"/>
        <dbReference type="ChEBI" id="CHEBI:60065"/>
        <dbReference type="ChEBI" id="CHEBI:60377"/>
        <dbReference type="ChEBI" id="CHEBI:78436"/>
    </reaction>
    <physiologicalReaction direction="left-to-right" evidence="1">
        <dbReference type="Rhea" id="RHEA:41761"/>
    </physiologicalReaction>
</comment>
<comment type="catalytic activity">
    <reaction evidence="1">
        <text>a ganglioside GM3 + CMP-N-acetyl-beta-neuraminate = a ganglioside GD3 + CMP + H(+)</text>
        <dbReference type="Rhea" id="RHEA:48288"/>
        <dbReference type="ChEBI" id="CHEBI:15378"/>
        <dbReference type="ChEBI" id="CHEBI:57812"/>
        <dbReference type="ChEBI" id="CHEBI:60377"/>
        <dbReference type="ChEBI" id="CHEBI:79210"/>
        <dbReference type="ChEBI" id="CHEBI:79214"/>
    </reaction>
    <physiologicalReaction direction="left-to-right" evidence="1">
        <dbReference type="Rhea" id="RHEA:48289"/>
    </physiologicalReaction>
</comment>
<comment type="catalytic activity">
    <reaction evidence="1">
        <text>an N-acetyl-alpha-neuraminyl-(2-&gt;3)-beta-D-galactosyl derivative + CMP-N-acetyl-beta-neuraminate = an N-acetyl-alpha-neuraminyl-(2-&gt;8)-N-acetyl-alpha-neuraminyl-(2-&gt;3)-beta-D-galactosyl derivative + CMP + H(+)</text>
        <dbReference type="Rhea" id="RHEA:19313"/>
        <dbReference type="ChEBI" id="CHEBI:15378"/>
        <dbReference type="ChEBI" id="CHEBI:57812"/>
        <dbReference type="ChEBI" id="CHEBI:60377"/>
        <dbReference type="ChEBI" id="CHEBI:140308"/>
        <dbReference type="ChEBI" id="CHEBI:140309"/>
        <dbReference type="EC" id="2.4.3.8"/>
    </reaction>
    <physiologicalReaction direction="left-to-right" evidence="1">
        <dbReference type="Rhea" id="RHEA:19314"/>
    </physiologicalReaction>
</comment>
<comment type="catalytic activity">
    <reaction evidence="1">
        <text>an N-acetyl-alpha-neuraminyl-(2-&gt;3)-beta-D-galactosyl-(1-&gt;4)-N-acetyl-beta-D-glucosaminyl derivative + CMP-N-acetyl-beta-neuraminate = an alpha-Neu5Ac-(2-&gt;8)-alpha-Neu5Ac-(2-&gt;3)-beta-D-Gal-(1-&gt;4)-beta-D-GlcNAc derivative + CMP + H(+)</text>
        <dbReference type="Rhea" id="RHEA:77387"/>
        <dbReference type="ChEBI" id="CHEBI:15378"/>
        <dbReference type="ChEBI" id="CHEBI:57812"/>
        <dbReference type="ChEBI" id="CHEBI:60377"/>
        <dbReference type="ChEBI" id="CHEBI:136545"/>
        <dbReference type="ChEBI" id="CHEBI:197334"/>
    </reaction>
    <physiologicalReaction direction="left-to-right" evidence="1">
        <dbReference type="Rhea" id="RHEA:77388"/>
    </physiologicalReaction>
</comment>
<comment type="biophysicochemical properties">
    <kinetics>
        <KM evidence="4">30 mM for N-acetyl-alpha-neuraminyl-(2-&gt;3)-beta-D-galactosyl-(1-&gt;4)-beta-D-glucose (with a constant CMP-Neu5Ac concentration of 1 mM)</KM>
        <KM evidence="4">2.6 mM for 3'-sialyl-N-acetyllactosamine-6-sulfate (with a constant CMP-Neu5Ac concentration of 1 mM)</KM>
        <KM evidence="4">0.21 mM for CMP-Neu5Ac (with a constant 3-sialyl-N-acetyllactosamine-6-sulfate concentration of 10 mM)</KM>
    </kinetics>
</comment>
<comment type="pathway">
    <text evidence="5 10 11">Protein modification; protein glycosylation.</text>
</comment>
<comment type="subunit">
    <text evidence="4">Homodimer.</text>
</comment>
<comment type="interaction">
    <interactant intactId="EBI-16165155">
        <id>O43173</id>
    </interactant>
    <interactant intactId="EBI-16165155">
        <id>O43173</id>
        <label>ST8SIA3</label>
    </interactant>
    <organismsDiffer>false</organismsDiffer>
    <experiments>4</experiments>
</comment>
<comment type="subcellular location">
    <subcellularLocation>
        <location evidence="10">Golgi apparatus membrane</location>
        <topology evidence="9">Single-pass type II membrane protein</topology>
    </subcellularLocation>
</comment>
<comment type="tissue specificity">
    <text evidence="5">Expressed in fetal and adult brain and fetal liver.</text>
</comment>
<comment type="PTM">
    <text evidence="3">Autopolysialylated.</text>
</comment>
<comment type="similarity">
    <text evidence="9">Belongs to the glycosyltransferase 29 family.</text>
</comment>
<comment type="online information" name="Functional Glycomics Gateway - GTase">
    <link uri="http://www.functionalglycomics.org/glycomics/molecule/jsp/glycoEnzyme/viewGlycoEnzyme.jsp?gbpId=gt_hum_638"/>
    <text>ST8Sia III</text>
</comment>
<organism>
    <name type="scientific">Homo sapiens</name>
    <name type="common">Human</name>
    <dbReference type="NCBI Taxonomy" id="9606"/>
    <lineage>
        <taxon>Eukaryota</taxon>
        <taxon>Metazoa</taxon>
        <taxon>Chordata</taxon>
        <taxon>Craniata</taxon>
        <taxon>Vertebrata</taxon>
        <taxon>Euteleostomi</taxon>
        <taxon>Mammalia</taxon>
        <taxon>Eutheria</taxon>
        <taxon>Euarchontoglires</taxon>
        <taxon>Primates</taxon>
        <taxon>Haplorrhini</taxon>
        <taxon>Catarrhini</taxon>
        <taxon>Hominidae</taxon>
        <taxon>Homo</taxon>
    </lineage>
</organism>
<name>SIA8C_HUMAN</name>
<sequence>MRNCKMARVASVLGLVMLSVALLILSLISYVSLKKENIFTTPKYASPGAPRMYMFHAGFRSQFALKFLDPSFVPITNSLTQELQEKPSKWKFNRTAFLHQRQEILQHVDVIKNFSLTKNSVRIGQLMHYDYSSHKYVFSISNNFRSLLPDVSPIMNKHYNICAVVGNSGILTGSQCGQEIDKSDFVFRCNFAPTEAFQRDVGRKTNLTTFNPSILEKYYNNLLTIQDRNNFFLSLKKLDGAILWIPAFFFHTSATVTRTLVDFFVEHRGQLKVQLAWPGNIMQHVNRYWKNKHLSPKRLSTGILMYTLASAICEEIHLYGFWPFGFDPNTREDLPYHYYDKKGTKFTTKWQESHQLPAEFQLLYRMHGEGLTKLTLSHCA</sequence>